<sequence length="96" mass="11277">MSTKYETMYILRPDLTDEIIDQTITRYQTLLAEQGAAPVETQHRGKRRLAYELKKFKEGIYVQMNYDAPTTAVAELEKAFRLSEEVIRFLTVREED</sequence>
<gene>
    <name evidence="1" type="primary">rpsF</name>
    <name evidence="1" type="synonym">rps6</name>
    <name type="ordered locus">gsl0434</name>
</gene>
<protein>
    <recommendedName>
        <fullName evidence="1">Small ribosomal subunit protein bS6</fullName>
    </recommendedName>
    <alternativeName>
        <fullName evidence="2">30S ribosomal protein S6</fullName>
    </alternativeName>
</protein>
<proteinExistence type="inferred from homology"/>
<comment type="function">
    <text evidence="1">Binds together with bS18 to 16S ribosomal RNA.</text>
</comment>
<comment type="similarity">
    <text evidence="1">Belongs to the bacterial ribosomal protein bS6 family.</text>
</comment>
<feature type="chain" id="PRO_0000176772" description="Small ribosomal subunit protein bS6">
    <location>
        <begin position="1"/>
        <end position="96"/>
    </location>
</feature>
<dbReference type="EMBL" id="BA000045">
    <property type="protein sequence ID" value="BAC88375.1"/>
    <property type="molecule type" value="Genomic_DNA"/>
</dbReference>
<dbReference type="RefSeq" id="NP_923380.1">
    <property type="nucleotide sequence ID" value="NC_005125.1"/>
</dbReference>
<dbReference type="RefSeq" id="WP_011140437.1">
    <property type="nucleotide sequence ID" value="NC_005125.1"/>
</dbReference>
<dbReference type="SMR" id="Q7NNH7"/>
<dbReference type="FunCoup" id="Q7NNH7">
    <property type="interactions" value="109"/>
</dbReference>
<dbReference type="STRING" id="251221.gene:10757906"/>
<dbReference type="EnsemblBacteria" id="BAC88375">
    <property type="protein sequence ID" value="BAC88375"/>
    <property type="gene ID" value="BAC88375"/>
</dbReference>
<dbReference type="KEGG" id="gvi:gsl0434"/>
<dbReference type="PATRIC" id="fig|251221.4.peg.442"/>
<dbReference type="eggNOG" id="COG0360">
    <property type="taxonomic scope" value="Bacteria"/>
</dbReference>
<dbReference type="HOGENOM" id="CLU_113441_5_2_3"/>
<dbReference type="InParanoid" id="Q7NNH7"/>
<dbReference type="OrthoDB" id="9812702at2"/>
<dbReference type="PhylomeDB" id="Q7NNH7"/>
<dbReference type="Proteomes" id="UP000000557">
    <property type="component" value="Chromosome"/>
</dbReference>
<dbReference type="GO" id="GO:0005737">
    <property type="term" value="C:cytoplasm"/>
    <property type="evidence" value="ECO:0007669"/>
    <property type="project" value="UniProtKB-ARBA"/>
</dbReference>
<dbReference type="GO" id="GO:1990904">
    <property type="term" value="C:ribonucleoprotein complex"/>
    <property type="evidence" value="ECO:0007669"/>
    <property type="project" value="UniProtKB-KW"/>
</dbReference>
<dbReference type="GO" id="GO:0005840">
    <property type="term" value="C:ribosome"/>
    <property type="evidence" value="ECO:0007669"/>
    <property type="project" value="UniProtKB-KW"/>
</dbReference>
<dbReference type="GO" id="GO:0070181">
    <property type="term" value="F:small ribosomal subunit rRNA binding"/>
    <property type="evidence" value="ECO:0000318"/>
    <property type="project" value="GO_Central"/>
</dbReference>
<dbReference type="GO" id="GO:0003735">
    <property type="term" value="F:structural constituent of ribosome"/>
    <property type="evidence" value="ECO:0000318"/>
    <property type="project" value="GO_Central"/>
</dbReference>
<dbReference type="GO" id="GO:0006412">
    <property type="term" value="P:translation"/>
    <property type="evidence" value="ECO:0007669"/>
    <property type="project" value="UniProtKB-UniRule"/>
</dbReference>
<dbReference type="CDD" id="cd15487">
    <property type="entry name" value="bS6_chloro_cyano"/>
    <property type="match status" value="1"/>
</dbReference>
<dbReference type="Gene3D" id="3.30.70.60">
    <property type="match status" value="1"/>
</dbReference>
<dbReference type="HAMAP" id="MF_00360">
    <property type="entry name" value="Ribosomal_bS6"/>
    <property type="match status" value="1"/>
</dbReference>
<dbReference type="InterPro" id="IPR000529">
    <property type="entry name" value="Ribosomal_bS6"/>
</dbReference>
<dbReference type="InterPro" id="IPR035980">
    <property type="entry name" value="Ribosomal_bS6_sf"/>
</dbReference>
<dbReference type="InterPro" id="IPR020814">
    <property type="entry name" value="Ribosomal_S6_plastid/chlpt"/>
</dbReference>
<dbReference type="InterPro" id="IPR014717">
    <property type="entry name" value="Transl_elong_EF1B/ribsomal_bS6"/>
</dbReference>
<dbReference type="NCBIfam" id="TIGR00166">
    <property type="entry name" value="S6"/>
    <property type="match status" value="1"/>
</dbReference>
<dbReference type="PANTHER" id="PTHR21011">
    <property type="entry name" value="MITOCHONDRIAL 28S RIBOSOMAL PROTEIN S6"/>
    <property type="match status" value="1"/>
</dbReference>
<dbReference type="PANTHER" id="PTHR21011:SF1">
    <property type="entry name" value="SMALL RIBOSOMAL SUBUNIT PROTEIN BS6M"/>
    <property type="match status" value="1"/>
</dbReference>
<dbReference type="Pfam" id="PF01250">
    <property type="entry name" value="Ribosomal_S6"/>
    <property type="match status" value="1"/>
</dbReference>
<dbReference type="SUPFAM" id="SSF54995">
    <property type="entry name" value="Ribosomal protein S6"/>
    <property type="match status" value="1"/>
</dbReference>
<organism>
    <name type="scientific">Gloeobacter violaceus (strain ATCC 29082 / PCC 7421)</name>
    <dbReference type="NCBI Taxonomy" id="251221"/>
    <lineage>
        <taxon>Bacteria</taxon>
        <taxon>Bacillati</taxon>
        <taxon>Cyanobacteriota</taxon>
        <taxon>Cyanophyceae</taxon>
        <taxon>Gloeobacterales</taxon>
        <taxon>Gloeobacteraceae</taxon>
        <taxon>Gloeobacter</taxon>
    </lineage>
</organism>
<accession>Q7NNH7</accession>
<keyword id="KW-1185">Reference proteome</keyword>
<keyword id="KW-0687">Ribonucleoprotein</keyword>
<keyword id="KW-0689">Ribosomal protein</keyword>
<keyword id="KW-0694">RNA-binding</keyword>
<keyword id="KW-0699">rRNA-binding</keyword>
<name>RS6_GLOVI</name>
<evidence type="ECO:0000255" key="1">
    <source>
        <dbReference type="HAMAP-Rule" id="MF_00360"/>
    </source>
</evidence>
<evidence type="ECO:0000305" key="2"/>
<reference key="1">
    <citation type="journal article" date="2003" name="DNA Res.">
        <title>Complete genome structure of Gloeobacter violaceus PCC 7421, a cyanobacterium that lacks thylakoids.</title>
        <authorList>
            <person name="Nakamura Y."/>
            <person name="Kaneko T."/>
            <person name="Sato S."/>
            <person name="Mimuro M."/>
            <person name="Miyashita H."/>
            <person name="Tsuchiya T."/>
            <person name="Sasamoto S."/>
            <person name="Watanabe A."/>
            <person name="Kawashima K."/>
            <person name="Kishida Y."/>
            <person name="Kiyokawa C."/>
            <person name="Kohara M."/>
            <person name="Matsumoto M."/>
            <person name="Matsuno A."/>
            <person name="Nakazaki N."/>
            <person name="Shimpo S."/>
            <person name="Takeuchi C."/>
            <person name="Yamada M."/>
            <person name="Tabata S."/>
        </authorList>
    </citation>
    <scope>NUCLEOTIDE SEQUENCE [LARGE SCALE GENOMIC DNA]</scope>
    <source>
        <strain>ATCC 29082 / PCC 7421</strain>
    </source>
</reference>